<name>BIOH_NEIMB</name>
<dbReference type="EC" id="3.1.1.85" evidence="2"/>
<dbReference type="EMBL" id="AE002098">
    <property type="protein sequence ID" value="AAF40724.1"/>
    <property type="status" value="ALT_INIT"/>
    <property type="molecule type" value="Genomic_DNA"/>
</dbReference>
<dbReference type="PIR" id="G81218">
    <property type="entry name" value="G81218"/>
</dbReference>
<dbReference type="RefSeq" id="NP_273326.1">
    <property type="nucleotide sequence ID" value="NC_003112.2"/>
</dbReference>
<dbReference type="SMR" id="Q9K197"/>
<dbReference type="FunCoup" id="Q9K197">
    <property type="interactions" value="138"/>
</dbReference>
<dbReference type="STRING" id="122586.NMB0270"/>
<dbReference type="ESTHER" id="neime-NMA2216">
    <property type="family name" value="BioH"/>
</dbReference>
<dbReference type="PaxDb" id="122586-NMB0270"/>
<dbReference type="KEGG" id="nme:NMB0270"/>
<dbReference type="PATRIC" id="fig|122586.8.peg.336"/>
<dbReference type="HOGENOM" id="CLU_020336_12_2_4"/>
<dbReference type="InParanoid" id="Q9K197"/>
<dbReference type="OrthoDB" id="9798888at2"/>
<dbReference type="UniPathway" id="UPA00078"/>
<dbReference type="Proteomes" id="UP000000425">
    <property type="component" value="Chromosome"/>
</dbReference>
<dbReference type="GO" id="GO:0005737">
    <property type="term" value="C:cytoplasm"/>
    <property type="evidence" value="ECO:0007669"/>
    <property type="project" value="UniProtKB-SubCell"/>
</dbReference>
<dbReference type="GO" id="GO:0052689">
    <property type="term" value="F:carboxylic ester hydrolase activity"/>
    <property type="evidence" value="ECO:0000250"/>
    <property type="project" value="UniProtKB"/>
</dbReference>
<dbReference type="GO" id="GO:0090499">
    <property type="term" value="F:pimelyl-[acyl-carrier protein] methyl ester esterase activity"/>
    <property type="evidence" value="ECO:0007669"/>
    <property type="project" value="UniProtKB-EC"/>
</dbReference>
<dbReference type="GO" id="GO:0009102">
    <property type="term" value="P:biotin biosynthetic process"/>
    <property type="evidence" value="ECO:0000314"/>
    <property type="project" value="UniProtKB"/>
</dbReference>
<dbReference type="FunFam" id="3.40.50.1820:FF:000523">
    <property type="entry name" value="Pimeloyl-[acyl-carrier protein] methyl ester esterase"/>
    <property type="match status" value="1"/>
</dbReference>
<dbReference type="Gene3D" id="3.40.50.1820">
    <property type="entry name" value="alpha/beta hydrolase"/>
    <property type="match status" value="1"/>
</dbReference>
<dbReference type="HAMAP" id="MF_01260">
    <property type="entry name" value="Carboxylester"/>
    <property type="match status" value="1"/>
</dbReference>
<dbReference type="InterPro" id="IPR000073">
    <property type="entry name" value="AB_hydrolase_1"/>
</dbReference>
<dbReference type="InterPro" id="IPR029058">
    <property type="entry name" value="AB_hydrolase_fold"/>
</dbReference>
<dbReference type="InterPro" id="IPR050266">
    <property type="entry name" value="AB_hydrolase_sf"/>
</dbReference>
<dbReference type="InterPro" id="IPR010076">
    <property type="entry name" value="BioH"/>
</dbReference>
<dbReference type="NCBIfam" id="TIGR01738">
    <property type="entry name" value="bioH"/>
    <property type="match status" value="1"/>
</dbReference>
<dbReference type="PANTHER" id="PTHR43798:SF31">
    <property type="entry name" value="AB HYDROLASE SUPERFAMILY PROTEIN YCLE"/>
    <property type="match status" value="1"/>
</dbReference>
<dbReference type="PANTHER" id="PTHR43798">
    <property type="entry name" value="MONOACYLGLYCEROL LIPASE"/>
    <property type="match status" value="1"/>
</dbReference>
<dbReference type="Pfam" id="PF00561">
    <property type="entry name" value="Abhydrolase_1"/>
    <property type="match status" value="1"/>
</dbReference>
<dbReference type="SUPFAM" id="SSF53474">
    <property type="entry name" value="alpha/beta-Hydrolases"/>
    <property type="match status" value="1"/>
</dbReference>
<protein>
    <recommendedName>
        <fullName evidence="2">Pimeloyl-[acyl-carrier protein] methyl ester esterase</fullName>
        <ecNumber evidence="2">3.1.1.85</ecNumber>
    </recommendedName>
    <alternativeName>
        <fullName evidence="2">Biotin synthesis protein BioH</fullName>
    </alternativeName>
    <alternativeName>
        <fullName evidence="2">Carboxylesterase BioH</fullName>
    </alternativeName>
</protein>
<sequence length="258" mass="28208">MRRQRERKSMPDAVKKVYLIHGWGANRHMFDDLMPRLPATWPVSAVDLPGHGDAPFVRPFDIAAAADGIAAQIDAPADILGWSLGGLVALYLAARHPDKVRSLCLTASFARLTADEDYPEGLAAPALGKMVGAFRSDYAKHIKQFLQLQLLHTPDADGIIGRILPDLARCGTPQALQEALDAAERADARHLLDKIDVPVLLVFGGKDAITPPRMGEYLHRRLKGSRLVVMEKAAHAPFLSHAEAFAALYRDFVEGGLR</sequence>
<accession>Q9K197</accession>
<feature type="chain" id="PRO_0000204484" description="Pimeloyl-[acyl-carrier protein] methyl ester esterase">
    <location>
        <begin position="1"/>
        <end position="258"/>
    </location>
</feature>
<feature type="domain" description="AB hydrolase-1" evidence="1">
    <location>
        <begin position="17"/>
        <end position="241"/>
    </location>
</feature>
<feature type="active site" description="Nucleophile" evidence="2">
    <location>
        <position position="83"/>
    </location>
</feature>
<feature type="active site" evidence="2">
    <location>
        <position position="207"/>
    </location>
</feature>
<feature type="active site" evidence="2">
    <location>
        <position position="235"/>
    </location>
</feature>
<feature type="binding site" evidence="2">
    <location>
        <position position="23"/>
    </location>
    <ligand>
        <name>substrate</name>
    </ligand>
</feature>
<feature type="binding site" evidence="2">
    <location>
        <begin position="83"/>
        <end position="84"/>
    </location>
    <ligand>
        <name>substrate</name>
    </ligand>
</feature>
<feature type="binding site" evidence="2">
    <location>
        <begin position="145"/>
        <end position="149"/>
    </location>
    <ligand>
        <name>substrate</name>
    </ligand>
</feature>
<feature type="binding site" evidence="2">
    <location>
        <position position="235"/>
    </location>
    <ligand>
        <name>substrate</name>
    </ligand>
</feature>
<organism>
    <name type="scientific">Neisseria meningitidis serogroup B (strain ATCC BAA-335 / MC58)</name>
    <dbReference type="NCBI Taxonomy" id="122586"/>
    <lineage>
        <taxon>Bacteria</taxon>
        <taxon>Pseudomonadati</taxon>
        <taxon>Pseudomonadota</taxon>
        <taxon>Betaproteobacteria</taxon>
        <taxon>Neisseriales</taxon>
        <taxon>Neisseriaceae</taxon>
        <taxon>Neisseria</taxon>
    </lineage>
</organism>
<keyword id="KW-0093">Biotin biosynthesis</keyword>
<keyword id="KW-0963">Cytoplasm</keyword>
<keyword id="KW-0378">Hydrolase</keyword>
<keyword id="KW-1185">Reference proteome</keyword>
<keyword id="KW-0719">Serine esterase</keyword>
<proteinExistence type="inferred from homology"/>
<evidence type="ECO:0000255" key="1"/>
<evidence type="ECO:0000255" key="2">
    <source>
        <dbReference type="HAMAP-Rule" id="MF_01260"/>
    </source>
</evidence>
<evidence type="ECO:0000305" key="3"/>
<comment type="function">
    <text evidence="2">The physiological role of BioH is to remove the methyl group introduced by BioC when the pimeloyl moiety is complete. It allows to synthesize pimeloyl-ACP via the fatty acid synthetic pathway through the hydrolysis of the ester bonds of pimeloyl-ACP esters.</text>
</comment>
<comment type="catalytic activity">
    <reaction evidence="2">
        <text>6-carboxyhexanoyl-[ACP] methyl ester + H2O = 6-carboxyhexanoyl-[ACP] + methanol + H(+)</text>
        <dbReference type="Rhea" id="RHEA:42700"/>
        <dbReference type="Rhea" id="RHEA-COMP:9955"/>
        <dbReference type="Rhea" id="RHEA-COMP:10186"/>
        <dbReference type="ChEBI" id="CHEBI:15377"/>
        <dbReference type="ChEBI" id="CHEBI:15378"/>
        <dbReference type="ChEBI" id="CHEBI:17790"/>
        <dbReference type="ChEBI" id="CHEBI:78846"/>
        <dbReference type="ChEBI" id="CHEBI:82735"/>
        <dbReference type="EC" id="3.1.1.85"/>
    </reaction>
</comment>
<comment type="pathway">
    <text evidence="2">Cofactor biosynthesis; biotin biosynthesis.</text>
</comment>
<comment type="subunit">
    <text evidence="2">Monomer.</text>
</comment>
<comment type="subcellular location">
    <subcellularLocation>
        <location evidence="2">Cytoplasm</location>
    </subcellularLocation>
</comment>
<comment type="similarity">
    <text evidence="2">Belongs to the AB hydrolase superfamily. Carboxylesterase BioH family.</text>
</comment>
<comment type="sequence caution" evidence="3">
    <conflict type="erroneous initiation">
        <sequence resource="EMBL-CDS" id="AAF40724"/>
    </conflict>
    <text>Truncated N-terminus.</text>
</comment>
<reference key="1">
    <citation type="journal article" date="2000" name="Science">
        <title>Complete genome sequence of Neisseria meningitidis serogroup B strain MC58.</title>
        <authorList>
            <person name="Tettelin H."/>
            <person name="Saunders N.J."/>
            <person name="Heidelberg J.F."/>
            <person name="Jeffries A.C."/>
            <person name="Nelson K.E."/>
            <person name="Eisen J.A."/>
            <person name="Ketchum K.A."/>
            <person name="Hood D.W."/>
            <person name="Peden J.F."/>
            <person name="Dodson R.J."/>
            <person name="Nelson W.C."/>
            <person name="Gwinn M.L."/>
            <person name="DeBoy R.T."/>
            <person name="Peterson J.D."/>
            <person name="Hickey E.K."/>
            <person name="Haft D.H."/>
            <person name="Salzberg S.L."/>
            <person name="White O."/>
            <person name="Fleischmann R.D."/>
            <person name="Dougherty B.A."/>
            <person name="Mason T.M."/>
            <person name="Ciecko A."/>
            <person name="Parksey D.S."/>
            <person name="Blair E."/>
            <person name="Cittone H."/>
            <person name="Clark E.B."/>
            <person name="Cotton M.D."/>
            <person name="Utterback T.R."/>
            <person name="Khouri H.M."/>
            <person name="Qin H."/>
            <person name="Vamathevan J.J."/>
            <person name="Gill J."/>
            <person name="Scarlato V."/>
            <person name="Masignani V."/>
            <person name="Pizza M."/>
            <person name="Grandi G."/>
            <person name="Sun L."/>
            <person name="Smith H.O."/>
            <person name="Fraser C.M."/>
            <person name="Moxon E.R."/>
            <person name="Rappuoli R."/>
            <person name="Venter J.C."/>
        </authorList>
    </citation>
    <scope>NUCLEOTIDE SEQUENCE [LARGE SCALE GENOMIC DNA]</scope>
    <source>
        <strain>ATCC BAA-335 / MC58</strain>
    </source>
</reference>
<gene>
    <name evidence="2" type="primary">bioH</name>
    <name type="ordered locus">NMB0270</name>
</gene>